<evidence type="ECO:0000269" key="1">
    <source>
    </source>
</evidence>
<evidence type="ECO:0000269" key="2">
    <source>
    </source>
</evidence>
<evidence type="ECO:0000269" key="3">
    <source>
    </source>
</evidence>
<evidence type="ECO:0000269" key="4">
    <source>
    </source>
</evidence>
<evidence type="ECO:0000269" key="5">
    <source>
    </source>
</evidence>
<evidence type="ECO:0000269" key="6">
    <source>
    </source>
</evidence>
<evidence type="ECO:0000269" key="7">
    <source>
    </source>
</evidence>
<evidence type="ECO:0000269" key="8">
    <source>
    </source>
</evidence>
<evidence type="ECO:0000269" key="9">
    <source>
    </source>
</evidence>
<evidence type="ECO:0000269" key="10">
    <source>
    </source>
</evidence>
<evidence type="ECO:0000269" key="11">
    <source>
    </source>
</evidence>
<evidence type="ECO:0000269" key="12">
    <source>
    </source>
</evidence>
<evidence type="ECO:0000269" key="13">
    <source>
    </source>
</evidence>
<evidence type="ECO:0000303" key="14">
    <source>
    </source>
</evidence>
<evidence type="ECO:0000305" key="15"/>
<evidence type="ECO:0000305" key="16">
    <source>
    </source>
</evidence>
<evidence type="ECO:0007829" key="17">
    <source>
        <dbReference type="PDB" id="1BY6"/>
    </source>
</evidence>
<evidence type="ECO:0007829" key="18">
    <source>
        <dbReference type="PDB" id="1I5J"/>
    </source>
</evidence>
<evidence type="ECO:0007829" key="19">
    <source>
        <dbReference type="PDB" id="1O8T"/>
    </source>
</evidence>
<evidence type="ECO:0007829" key="20">
    <source>
        <dbReference type="PDB" id="1SOH"/>
    </source>
</evidence>
<organism>
    <name type="scientific">Homo sapiens</name>
    <name type="common">Human</name>
    <dbReference type="NCBI Taxonomy" id="9606"/>
    <lineage>
        <taxon>Eukaryota</taxon>
        <taxon>Metazoa</taxon>
        <taxon>Chordata</taxon>
        <taxon>Craniata</taxon>
        <taxon>Vertebrata</taxon>
        <taxon>Euteleostomi</taxon>
        <taxon>Mammalia</taxon>
        <taxon>Eutheria</taxon>
        <taxon>Euarchontoglires</taxon>
        <taxon>Primates</taxon>
        <taxon>Haplorrhini</taxon>
        <taxon>Catarrhini</taxon>
        <taxon>Hominidae</taxon>
        <taxon>Homo</taxon>
    </lineage>
</organism>
<gene>
    <name type="primary">APOC2</name>
    <name type="synonym">APC2</name>
</gene>
<dbReference type="EMBL" id="X05151">
    <property type="protein sequence ID" value="CAA28798.1"/>
    <property type="molecule type" value="Genomic_DNA"/>
</dbReference>
<dbReference type="EMBL" id="X00568">
    <property type="protein sequence ID" value="CAA25234.1"/>
    <property type="molecule type" value="mRNA"/>
</dbReference>
<dbReference type="EMBL" id="J02698">
    <property type="protein sequence ID" value="AAA98743.1"/>
    <property type="molecule type" value="Genomic_DNA"/>
</dbReference>
<dbReference type="EMBL" id="AY422955">
    <property type="protein sequence ID" value="AAQ91814.1"/>
    <property type="molecule type" value="Genomic_DNA"/>
</dbReference>
<dbReference type="EMBL" id="BT006708">
    <property type="protein sequence ID" value="AAP35354.1"/>
    <property type="molecule type" value="mRNA"/>
</dbReference>
<dbReference type="EMBL" id="FJ525875">
    <property type="protein sequence ID" value="ACN81313.1"/>
    <property type="molecule type" value="Genomic_DNA"/>
</dbReference>
<dbReference type="EMBL" id="CH471126">
    <property type="protein sequence ID" value="EAW57311.1"/>
    <property type="molecule type" value="Genomic_DNA"/>
</dbReference>
<dbReference type="EMBL" id="BC005348">
    <property type="protein sequence ID" value="AAH05348.3"/>
    <property type="molecule type" value="mRNA"/>
</dbReference>
<dbReference type="EMBL" id="M29844">
    <property type="protein sequence ID" value="AAA51743.1"/>
    <property type="molecule type" value="mRNA"/>
</dbReference>
<dbReference type="EMBL" id="M10612">
    <property type="protein sequence ID" value="AAB59380.1"/>
    <property type="molecule type" value="Genomic_DNA"/>
</dbReference>
<dbReference type="EMBL" id="AF113884">
    <property type="protein sequence ID" value="AAD28193.1"/>
    <property type="molecule type" value="mRNA"/>
</dbReference>
<dbReference type="CCDS" id="CCDS12650.1"/>
<dbReference type="PIR" id="A24238">
    <property type="entry name" value="LPHUC2"/>
</dbReference>
<dbReference type="RefSeq" id="NP_000474.2">
    <property type="nucleotide sequence ID" value="NM_000483.4"/>
</dbReference>
<dbReference type="PDB" id="1BY6">
    <property type="method" value="NMR"/>
    <property type="chains" value="A=66-101"/>
</dbReference>
<dbReference type="PDB" id="1I5J">
    <property type="method" value="NMR"/>
    <property type="chains" value="A=23-101"/>
</dbReference>
<dbReference type="PDB" id="1O8T">
    <property type="method" value="NMR"/>
    <property type="chains" value="A=23-101"/>
</dbReference>
<dbReference type="PDB" id="1SOH">
    <property type="method" value="NMR"/>
    <property type="chains" value="A=23-101"/>
</dbReference>
<dbReference type="PDBsum" id="1BY6"/>
<dbReference type="PDBsum" id="1I5J"/>
<dbReference type="PDBsum" id="1O8T"/>
<dbReference type="PDBsum" id="1SOH"/>
<dbReference type="BMRB" id="P02655"/>
<dbReference type="SMR" id="P02655"/>
<dbReference type="BioGRID" id="106841">
    <property type="interactions" value="46"/>
</dbReference>
<dbReference type="FunCoup" id="P02655">
    <property type="interactions" value="16"/>
</dbReference>
<dbReference type="IntAct" id="P02655">
    <property type="interactions" value="11"/>
</dbReference>
<dbReference type="MINT" id="P02655"/>
<dbReference type="STRING" id="9606.ENSP00000466775"/>
<dbReference type="DrugBank" id="DB09130">
    <property type="generic name" value="Copper"/>
</dbReference>
<dbReference type="DrugBank" id="DB11886">
    <property type="generic name" value="Infigratinib"/>
</dbReference>
<dbReference type="DrugBank" id="DB00877">
    <property type="generic name" value="Sirolimus"/>
</dbReference>
<dbReference type="DrugBank" id="DB00460">
    <property type="generic name" value="Verteporfin"/>
</dbReference>
<dbReference type="GlyCosmos" id="P02655">
    <property type="glycosylation" value="3 sites, 2 glycans"/>
</dbReference>
<dbReference type="GlyGen" id="P02655">
    <property type="glycosylation" value="4 sites, 4 O-linked glycans (4 sites)"/>
</dbReference>
<dbReference type="iPTMnet" id="P02655"/>
<dbReference type="MetOSite" id="P02655"/>
<dbReference type="PhosphoSitePlus" id="P02655"/>
<dbReference type="BioMuta" id="APOC2"/>
<dbReference type="DMDM" id="114022"/>
<dbReference type="CPTAC" id="non-CPTAC-1084"/>
<dbReference type="CPTAC" id="non-CPTAC-2625"/>
<dbReference type="jPOST" id="P02655"/>
<dbReference type="MassIVE" id="P02655"/>
<dbReference type="PaxDb" id="9606-ENSP00000252490"/>
<dbReference type="PeptideAtlas" id="P02655"/>
<dbReference type="ProteomicsDB" id="51540"/>
<dbReference type="Pumba" id="P02655"/>
<dbReference type="TopDownProteomics" id="P02655"/>
<dbReference type="Antibodypedia" id="31235">
    <property type="antibodies" value="150 antibodies from 22 providers"/>
</dbReference>
<dbReference type="DNASU" id="344"/>
<dbReference type="Ensembl" id="ENST00000252490.7">
    <property type="protein sequence ID" value="ENSP00000252490.5"/>
    <property type="gene ID" value="ENSG00000234906.11"/>
</dbReference>
<dbReference type="Ensembl" id="ENST00000590360.2">
    <property type="protein sequence ID" value="ENSP00000466775.1"/>
    <property type="gene ID" value="ENSG00000234906.11"/>
</dbReference>
<dbReference type="GeneID" id="344"/>
<dbReference type="KEGG" id="hsa:344"/>
<dbReference type="MANE-Select" id="ENST00000252490.7">
    <property type="protein sequence ID" value="ENSP00000252490.5"/>
    <property type="RefSeq nucleotide sequence ID" value="NM_000483.5"/>
    <property type="RefSeq protein sequence ID" value="NP_000474.2"/>
</dbReference>
<dbReference type="UCSC" id="uc060zuu.1">
    <property type="organism name" value="human"/>
</dbReference>
<dbReference type="AGR" id="HGNC:609"/>
<dbReference type="CTD" id="344"/>
<dbReference type="DisGeNET" id="344"/>
<dbReference type="GeneCards" id="APOC2"/>
<dbReference type="HGNC" id="HGNC:609">
    <property type="gene designation" value="APOC2"/>
</dbReference>
<dbReference type="HPA" id="ENSG00000234906">
    <property type="expression patterns" value="Tissue enriched (liver)"/>
</dbReference>
<dbReference type="MalaCards" id="APOC2"/>
<dbReference type="MIM" id="207750">
    <property type="type" value="phenotype"/>
</dbReference>
<dbReference type="MIM" id="608083">
    <property type="type" value="gene"/>
</dbReference>
<dbReference type="neXtProt" id="NX_P02655"/>
<dbReference type="OpenTargets" id="ENSG00000234906"/>
<dbReference type="Orphanet" id="309020">
    <property type="disease" value="Familial apolipoprotein C-II deficiency"/>
</dbReference>
<dbReference type="PharmGKB" id="PA52"/>
<dbReference type="VEuPathDB" id="HostDB:ENSG00000234906"/>
<dbReference type="eggNOG" id="ENOG502SEJB">
    <property type="taxonomic scope" value="Eukaryota"/>
</dbReference>
<dbReference type="GeneTree" id="ENSGT00390000007913"/>
<dbReference type="HOGENOM" id="CLU_180154_0_0_1"/>
<dbReference type="InParanoid" id="P02655"/>
<dbReference type="OMA" id="GTHEPQE"/>
<dbReference type="OrthoDB" id="9881800at2759"/>
<dbReference type="PAN-GO" id="P02655">
    <property type="GO annotations" value="15 GO annotations based on evolutionary models"/>
</dbReference>
<dbReference type="PhylomeDB" id="P02655"/>
<dbReference type="PathwayCommons" id="P02655"/>
<dbReference type="Reactome" id="R-HSA-8963888">
    <property type="pathway name" value="Chylomicron assembly"/>
</dbReference>
<dbReference type="Reactome" id="R-HSA-8963889">
    <property type="pathway name" value="Assembly of active LPL and LIPC lipase complexes"/>
</dbReference>
<dbReference type="Reactome" id="R-HSA-8963901">
    <property type="pathway name" value="Chylomicron remodeling"/>
</dbReference>
<dbReference type="Reactome" id="R-HSA-8964058">
    <property type="pathway name" value="HDL remodeling"/>
</dbReference>
<dbReference type="Reactome" id="R-HSA-9029569">
    <property type="pathway name" value="NR1H3 &amp; NR1H2 regulate gene expression linked to cholesterol transport and efflux"/>
</dbReference>
<dbReference type="Reactome" id="R-HSA-975634">
    <property type="pathway name" value="Retinoid metabolism and transport"/>
</dbReference>
<dbReference type="SignaLink" id="P02655"/>
<dbReference type="SIGNOR" id="P02655"/>
<dbReference type="BioGRID-ORCS" id="344">
    <property type="hits" value="11 hits in 1055 CRISPR screens"/>
</dbReference>
<dbReference type="EvolutionaryTrace" id="P02655"/>
<dbReference type="GeneWiki" id="Apolipoprotein_C2"/>
<dbReference type="GenomeRNAi" id="344"/>
<dbReference type="Pharos" id="P02655">
    <property type="development level" value="Tbio"/>
</dbReference>
<dbReference type="PRO" id="PR:P02655"/>
<dbReference type="Proteomes" id="UP000005640">
    <property type="component" value="Chromosome 19"/>
</dbReference>
<dbReference type="RNAct" id="P02655">
    <property type="molecule type" value="protein"/>
</dbReference>
<dbReference type="Bgee" id="ENSG00000234906">
    <property type="expression patterns" value="Expressed in right lobe of liver and 97 other cell types or tissues"/>
</dbReference>
<dbReference type="ExpressionAtlas" id="P02655">
    <property type="expression patterns" value="baseline and differential"/>
</dbReference>
<dbReference type="GO" id="GO:0042627">
    <property type="term" value="C:chylomicron"/>
    <property type="evidence" value="ECO:0000314"/>
    <property type="project" value="BHF-UCL"/>
</dbReference>
<dbReference type="GO" id="GO:0005769">
    <property type="term" value="C:early endosome"/>
    <property type="evidence" value="ECO:0000304"/>
    <property type="project" value="Reactome"/>
</dbReference>
<dbReference type="GO" id="GO:0005576">
    <property type="term" value="C:extracellular region"/>
    <property type="evidence" value="ECO:0000304"/>
    <property type="project" value="Reactome"/>
</dbReference>
<dbReference type="GO" id="GO:0005615">
    <property type="term" value="C:extracellular space"/>
    <property type="evidence" value="ECO:0000314"/>
    <property type="project" value="BHF-UCL"/>
</dbReference>
<dbReference type="GO" id="GO:0034363">
    <property type="term" value="C:intermediate-density lipoprotein particle"/>
    <property type="evidence" value="ECO:0000314"/>
    <property type="project" value="BHF-UCL"/>
</dbReference>
<dbReference type="GO" id="GO:0034362">
    <property type="term" value="C:low-density lipoprotein particle"/>
    <property type="evidence" value="ECO:0000314"/>
    <property type="project" value="BHF-UCL"/>
</dbReference>
<dbReference type="GO" id="GO:0034366">
    <property type="term" value="C:spherical high-density lipoprotein particle"/>
    <property type="evidence" value="ECO:0000314"/>
    <property type="project" value="BHF-UCL"/>
</dbReference>
<dbReference type="GO" id="GO:0034361">
    <property type="term" value="C:very-low-density lipoprotein particle"/>
    <property type="evidence" value="ECO:0000314"/>
    <property type="project" value="BHF-UCL"/>
</dbReference>
<dbReference type="GO" id="GO:0055102">
    <property type="term" value="F:lipase inhibitor activity"/>
    <property type="evidence" value="ECO:0000314"/>
    <property type="project" value="BHF-UCL"/>
</dbReference>
<dbReference type="GO" id="GO:0008289">
    <property type="term" value="F:lipid binding"/>
    <property type="evidence" value="ECO:0000314"/>
    <property type="project" value="BHF-UCL"/>
</dbReference>
<dbReference type="GO" id="GO:0060230">
    <property type="term" value="F:lipoprotein lipase activator activity"/>
    <property type="evidence" value="ECO:0000314"/>
    <property type="project" value="BHF-UCL"/>
</dbReference>
<dbReference type="GO" id="GO:0140677">
    <property type="term" value="F:molecular function activator activity"/>
    <property type="evidence" value="ECO:0000269"/>
    <property type="project" value="DisProt"/>
</dbReference>
<dbReference type="GO" id="GO:0016004">
    <property type="term" value="F:phospholipase activator activity"/>
    <property type="evidence" value="ECO:0000314"/>
    <property type="project" value="BHF-UCL"/>
</dbReference>
<dbReference type="GO" id="GO:0043274">
    <property type="term" value="F:phospholipase binding"/>
    <property type="evidence" value="ECO:0000353"/>
    <property type="project" value="BHF-UCL"/>
</dbReference>
<dbReference type="GO" id="GO:0033344">
    <property type="term" value="P:cholesterol efflux"/>
    <property type="evidence" value="ECO:0000314"/>
    <property type="project" value="BHF-UCL"/>
</dbReference>
<dbReference type="GO" id="GO:0042632">
    <property type="term" value="P:cholesterol homeostasis"/>
    <property type="evidence" value="ECO:0000305"/>
    <property type="project" value="BHF-UCL"/>
</dbReference>
<dbReference type="GO" id="GO:0034382">
    <property type="term" value="P:chylomicron remnant clearance"/>
    <property type="evidence" value="ECO:0000314"/>
    <property type="project" value="BHF-UCL"/>
</dbReference>
<dbReference type="GO" id="GO:0034371">
    <property type="term" value="P:chylomicron remodeling"/>
    <property type="evidence" value="ECO:0000314"/>
    <property type="project" value="BHF-UCL"/>
</dbReference>
<dbReference type="GO" id="GO:0034384">
    <property type="term" value="P:high-density lipoprotein particle clearance"/>
    <property type="evidence" value="ECO:0000315"/>
    <property type="project" value="BHF-UCL"/>
</dbReference>
<dbReference type="GO" id="GO:0016042">
    <property type="term" value="P:lipid catabolic process"/>
    <property type="evidence" value="ECO:0007669"/>
    <property type="project" value="UniProtKB-KW"/>
</dbReference>
<dbReference type="GO" id="GO:0042159">
    <property type="term" value="P:lipoprotein catabolic process"/>
    <property type="evidence" value="ECO:0000318"/>
    <property type="project" value="GO_Central"/>
</dbReference>
<dbReference type="GO" id="GO:0032375">
    <property type="term" value="P:negative regulation of cholesterol transport"/>
    <property type="evidence" value="ECO:0000315"/>
    <property type="project" value="BHF-UCL"/>
</dbReference>
<dbReference type="GO" id="GO:0045833">
    <property type="term" value="P:negative regulation of lipid metabolic process"/>
    <property type="evidence" value="ECO:0000314"/>
    <property type="project" value="BHF-UCL"/>
</dbReference>
<dbReference type="GO" id="GO:0048261">
    <property type="term" value="P:negative regulation of receptor-mediated endocytosis"/>
    <property type="evidence" value="ECO:0000314"/>
    <property type="project" value="BHF-UCL"/>
</dbReference>
<dbReference type="GO" id="GO:0010916">
    <property type="term" value="P:negative regulation of very-low-density lipoprotein particle clearance"/>
    <property type="evidence" value="ECO:0000314"/>
    <property type="project" value="BHF-UCL"/>
</dbReference>
<dbReference type="GO" id="GO:0033700">
    <property type="term" value="P:phospholipid efflux"/>
    <property type="evidence" value="ECO:0000314"/>
    <property type="project" value="BHF-UCL"/>
</dbReference>
<dbReference type="GO" id="GO:0045723">
    <property type="term" value="P:positive regulation of fatty acid biosynthetic process"/>
    <property type="evidence" value="ECO:0000314"/>
    <property type="project" value="BHF-UCL"/>
</dbReference>
<dbReference type="GO" id="GO:0060697">
    <property type="term" value="P:positive regulation of phospholipid catabolic process"/>
    <property type="evidence" value="ECO:0000314"/>
    <property type="project" value="BHF-UCL"/>
</dbReference>
<dbReference type="GO" id="GO:0010898">
    <property type="term" value="P:positive regulation of triglyceride catabolic process"/>
    <property type="evidence" value="ECO:0000314"/>
    <property type="project" value="BHF-UCL"/>
</dbReference>
<dbReference type="GO" id="GO:0010902">
    <property type="term" value="P:positive regulation of very-low-density lipoprotein particle remodeling"/>
    <property type="evidence" value="ECO:0000314"/>
    <property type="project" value="BHF-UCL"/>
</dbReference>
<dbReference type="GO" id="GO:0043691">
    <property type="term" value="P:reverse cholesterol transport"/>
    <property type="evidence" value="ECO:0000305"/>
    <property type="project" value="BHF-UCL"/>
</dbReference>
<dbReference type="GO" id="GO:0070328">
    <property type="term" value="P:triglyceride homeostasis"/>
    <property type="evidence" value="ECO:0000315"/>
    <property type="project" value="BHF-UCL"/>
</dbReference>
<dbReference type="GO" id="GO:0034370">
    <property type="term" value="P:triglyceride-rich lipoprotein particle remodeling"/>
    <property type="evidence" value="ECO:0000304"/>
    <property type="project" value="BHF-UCL"/>
</dbReference>
<dbReference type="GO" id="GO:0034372">
    <property type="term" value="P:very-low-density lipoprotein particle remodeling"/>
    <property type="evidence" value="ECO:0000304"/>
    <property type="project" value="BHF-UCL"/>
</dbReference>
<dbReference type="DisProt" id="DP01883"/>
<dbReference type="FunFam" id="1.10.1440.10:FF:000001">
    <property type="entry name" value="Apolipoprotein C-II"/>
    <property type="match status" value="1"/>
</dbReference>
<dbReference type="Gene3D" id="1.10.1440.10">
    <property type="entry name" value="Apolipoprotein C-II"/>
    <property type="match status" value="1"/>
</dbReference>
<dbReference type="InterPro" id="IPR008019">
    <property type="entry name" value="Apo-CII"/>
</dbReference>
<dbReference type="InterPro" id="IPR023121">
    <property type="entry name" value="ApoC-II_dom_sf"/>
</dbReference>
<dbReference type="PANTHER" id="PTHR16566">
    <property type="entry name" value="APOLIPOPROTEIN C-II"/>
    <property type="match status" value="1"/>
</dbReference>
<dbReference type="PANTHER" id="PTHR16566:SF0">
    <property type="entry name" value="APOLIPOPROTEIN C-II"/>
    <property type="match status" value="1"/>
</dbReference>
<dbReference type="Pfam" id="PF05355">
    <property type="entry name" value="Apo-CII"/>
    <property type="match status" value="1"/>
</dbReference>
<comment type="function">
    <text evidence="5 14">Component of chylomicrons, very low-density lipoproteins (VLDL), low-density lipoproteins (LDL), and high-density lipoproteins (HDL) in plasma. Plays an important role in lipoprotein metabolism as an activator of lipoprotein lipase. Both proapolipoprotein C-II and apolipoprotein C-II can activate lipoprotein lipase. In normolipidemic individuals, it is mainly distributed in the HDL, whereas in hypertriglyceridemic individuals, predominantly found in the VLDL and LDL.</text>
</comment>
<comment type="interaction">
    <interactant intactId="EBI-1223594">
        <id>P02655</id>
    </interactant>
    <interactant intactId="EBI-10210710">
        <id>P49638</id>
        <label>TTPA</label>
    </interactant>
    <organismsDiffer>false</organismsDiffer>
    <experiments>3</experiments>
</comment>
<comment type="interaction">
    <interactant intactId="EBI-25338752">
        <id>PRO_0000002024</id>
    </interactant>
    <interactant intactId="EBI-25338752">
        <id>PRO_0000002024</id>
        <label>APOC2</label>
        <dbReference type="UniProtKB" id="P02655"/>
    </interactant>
    <organismsDiffer>false</organismsDiffer>
    <experiments>16</experiments>
</comment>
<comment type="subcellular location">
    <subcellularLocation>
        <location evidence="6">Secreted</location>
    </subcellularLocation>
</comment>
<comment type="tissue specificity">
    <text evidence="8">Liver and intestine.</text>
</comment>
<comment type="PTM">
    <text evidence="6">Proapolipoprotein C-II is synthesized as a sialic acid containing glycoprotein which is subsequently desialylated prior to its proteolytic processing.</text>
</comment>
<comment type="PTM">
    <text evidence="6">Proapolipoprotein C-II, the major form found in plasma undergoes proteolytic cleavage of its N-terminal hexapeptide to generate apolipoprotein C-II, which occurs as the minor form in plasma.</text>
</comment>
<comment type="disease" evidence="12">
    <disease id="DI-01770">
        <name>Hyperlipoproteinemia 1B</name>
        <acronym>HLPP1B</acronym>
        <description>Autosomal recessive trait characterized by hypertriglyceridemia, xanthomas, and increased risk of pancreatitis and early atherosclerosis.</description>
        <dbReference type="MIM" id="207750"/>
    </disease>
    <text>The disease is caused by variants affecting the gene represented in this entry.</text>
</comment>
<comment type="similarity">
    <text evidence="15">Belongs to the apolipoprotein C2 family.</text>
</comment>
<feature type="signal peptide" evidence="4 9">
    <location>
        <begin position="1"/>
        <end position="22"/>
    </location>
</feature>
<feature type="chain" id="PRO_0000002024" description="Proapolipoprotein C-II" evidence="4 9">
    <location>
        <begin position="23"/>
        <end position="101"/>
    </location>
</feature>
<feature type="chain" id="PRO_0000430839" description="Apolipoprotein C-II" evidence="16">
    <location>
        <begin position="29"/>
        <end position="101"/>
    </location>
</feature>
<feature type="region of interest" description="O-glycosylated at one site">
    <location>
        <begin position="23"/>
        <end position="38"/>
    </location>
</feature>
<feature type="region of interest" description="Lipid binding" evidence="10">
    <location>
        <begin position="66"/>
        <end position="74"/>
    </location>
</feature>
<feature type="region of interest" description="Lipoprotein lipase cofactor" evidence="2 10">
    <location>
        <begin position="78"/>
        <end position="101"/>
    </location>
</feature>
<feature type="sequence variant" id="VAR_000639" description="In dbSNP:rs120074114." evidence="3 11">
    <original>K</original>
    <variation>T</variation>
    <location>
        <position position="41"/>
    </location>
</feature>
<feature type="sequence variant" id="VAR_000640" description="In HLPP1B; variant Wakayama; dbSNP:rs120074115." evidence="12">
    <original>W</original>
    <variation>R</variation>
    <location>
        <position position="48"/>
    </location>
</feature>
<feature type="sequence variant" id="VAR_000641" description="In San Francisco; found in hyperlipidemic patients; dbSNP:rs5122." evidence="13">
    <original>E</original>
    <variation>K</variation>
    <location>
        <position position="60"/>
    </location>
</feature>
<feature type="sequence variant" id="VAR_000642" description="In Africa; dbSNP:rs5126." evidence="1 7">
    <original>K</original>
    <variation>Q</variation>
    <location>
        <position position="77"/>
    </location>
</feature>
<feature type="sequence conflict" description="In Ref. 7; AAP35354 and 8; ACN81313." evidence="15" ref="7 8">
    <original>F</original>
    <variation>L</variation>
    <location>
        <position position="36"/>
    </location>
</feature>
<feature type="strand" evidence="19">
    <location>
        <begin position="28"/>
        <end position="31"/>
    </location>
</feature>
<feature type="helix" evidence="18">
    <location>
        <begin position="37"/>
        <end position="57"/>
    </location>
</feature>
<feature type="turn" evidence="18">
    <location>
        <begin position="58"/>
        <end position="61"/>
    </location>
</feature>
<feature type="strand" evidence="18">
    <location>
        <begin position="62"/>
        <end position="64"/>
    </location>
</feature>
<feature type="turn" evidence="20">
    <location>
        <begin position="68"/>
        <end position="70"/>
    </location>
</feature>
<feature type="strand" evidence="18">
    <location>
        <begin position="71"/>
        <end position="74"/>
    </location>
</feature>
<feature type="turn" evidence="17">
    <location>
        <begin position="75"/>
        <end position="77"/>
    </location>
</feature>
<feature type="turn" evidence="17">
    <location>
        <begin position="79"/>
        <end position="81"/>
    </location>
</feature>
<feature type="strand" evidence="17">
    <location>
        <begin position="86"/>
        <end position="88"/>
    </location>
</feature>
<feature type="helix" evidence="17">
    <location>
        <begin position="92"/>
        <end position="94"/>
    </location>
</feature>
<feature type="helix" evidence="17">
    <location>
        <begin position="97"/>
        <end position="99"/>
    </location>
</feature>
<keyword id="KW-0002">3D-structure</keyword>
<keyword id="KW-0162">Chylomicron</keyword>
<keyword id="KW-0903">Direct protein sequencing</keyword>
<keyword id="KW-0225">Disease variant</keyword>
<keyword id="KW-0325">Glycoprotein</keyword>
<keyword id="KW-0345">HDL</keyword>
<keyword id="KW-0380">Hyperlipidemia</keyword>
<keyword id="KW-0427">LDL</keyword>
<keyword id="KW-0442">Lipid degradation</keyword>
<keyword id="KW-0443">Lipid metabolism</keyword>
<keyword id="KW-0445">Lipid transport</keyword>
<keyword id="KW-1267">Proteomics identification</keyword>
<keyword id="KW-1185">Reference proteome</keyword>
<keyword id="KW-0964">Secreted</keyword>
<keyword id="KW-0730">Sialic acid</keyword>
<keyword id="KW-0732">Signal</keyword>
<keyword id="KW-0813">Transport</keyword>
<keyword id="KW-0850">VLDL</keyword>
<proteinExistence type="evidence at protein level"/>
<sequence length="101" mass="11284">MGTRLLPALFLVLLVLGFEVQGTQQPQQDEMPSPTFLTQVKESLSSYWESAKTAAQNLYEKTYLPAVDEKLRDLYSKSTAAMSTYTGIFTDQVLSVLKGEE</sequence>
<name>APOC2_HUMAN</name>
<reference key="1">
    <citation type="journal article" date="1987" name="FEBS Lett.">
        <title>The human preproapolipoprotein C-II gene. Complete nucleic acid sequence and genomic organization.</title>
        <authorList>
            <person name="Fojo S.S."/>
            <person name="Law S.W."/>
            <person name="Brewer H.B. Jr."/>
        </authorList>
    </citation>
    <scope>NUCLEOTIDE SEQUENCE [GENOMIC DNA]</scope>
</reference>
<reference key="2">
    <citation type="journal article" date="1984" name="Proc. Natl. Acad. Sci. U.S.A.">
        <title>Human apolipoprotein C-II: complete nucleic acid sequence of preapolipoprotein C-II.</title>
        <authorList>
            <person name="Fojo S.S."/>
            <person name="Law S.W."/>
            <person name="Brewer H.B. Jr."/>
        </authorList>
    </citation>
    <scope>NUCLEOTIDE SEQUENCE [GENOMIC DNA / MRNA]</scope>
</reference>
<reference key="3">
    <citation type="journal article" date="1984" name="Nucleic Acids Res.">
        <title>Human apolipoproteins AI, AII, CII and CIII. cDNA sequences and mRNA abundance.</title>
        <authorList>
            <person name="Sharpe C.R."/>
            <person name="Sidoli A."/>
            <person name="Shelley C.S."/>
            <person name="Lucero M.A."/>
            <person name="Shoulders C.C."/>
            <person name="Baralle F.E."/>
        </authorList>
    </citation>
    <scope>NUCLEOTIDE SEQUENCE [MRNA]</scope>
</reference>
<reference key="4">
    <citation type="journal article" date="1987" name="J. Biol. Chem.">
        <title>The human apolipoprotein C-II gene sequence contains a novel chromosome 19-specific minisatellite in its third intron.</title>
        <authorList>
            <person name="Das H.K."/>
            <person name="Jackson C.L."/>
            <person name="Miller D.A."/>
            <person name="Leff T."/>
            <person name="Breslow J.L."/>
        </authorList>
    </citation>
    <scope>NUCLEOTIDE SEQUENCE [GENOMIC DNA]</scope>
</reference>
<reference key="5">
    <citation type="journal article" date="1985" name="J. Biol. Chem.">
        <title>The structure of the human apolipoprotein C-II gene. Electron microscopic analysis of RNA:DNA hybrids, complete nucleotide sequence, and identification of 5' homologous sequences among apolipoprotein genes.</title>
        <authorList>
            <person name="Wei C.F."/>
            <person name="Tsao Y.K."/>
            <person name="Robberson D.L."/>
            <person name="Gotto A.M. Jr."/>
            <person name="Brown K."/>
            <person name="Chan L."/>
        </authorList>
    </citation>
    <scope>NUCLEOTIDE SEQUENCE [GENOMIC DNA / MRNA]</scope>
</reference>
<reference key="6">
    <citation type="submission" date="2003-09" db="EMBL/GenBank/DDBJ databases">
        <authorList>
            <person name="Nickerson D.A."/>
            <person name="Smith J.D."/>
            <person name="Fullerton S.M."/>
            <person name="Clark A.G."/>
            <person name="Stengard J.H."/>
            <person name="Salomaa V."/>
            <person name="Boerwinkle E."/>
            <person name="Sing C.F."/>
            <person name="Weiss K.M."/>
        </authorList>
    </citation>
    <scope>NUCLEOTIDE SEQUENCE [GENOMIC DNA]</scope>
</reference>
<reference key="7">
    <citation type="submission" date="2003-05" db="EMBL/GenBank/DDBJ databases">
        <title>Cloning of human full-length CDSs in BD Creator(TM) system donor vector.</title>
        <authorList>
            <person name="Kalnine N."/>
            <person name="Chen X."/>
            <person name="Rolfs A."/>
            <person name="Halleck A."/>
            <person name="Hines L."/>
            <person name="Eisenstein S."/>
            <person name="Koundinya M."/>
            <person name="Raphael J."/>
            <person name="Moreira D."/>
            <person name="Kelley T."/>
            <person name="LaBaer J."/>
            <person name="Lin Y."/>
            <person name="Phelan M."/>
            <person name="Farmer A."/>
        </authorList>
    </citation>
    <scope>NUCLEOTIDE SEQUENCE [LARGE SCALE MRNA]</scope>
</reference>
<reference key="8">
    <citation type="submission" date="2008-12" db="EMBL/GenBank/DDBJ databases">
        <authorList>
            <consortium name="NHLBI resequencing and genotyping service (RS&amp;G)"/>
        </authorList>
    </citation>
    <scope>NUCLEOTIDE SEQUENCE [GENOMIC DNA]</scope>
</reference>
<reference key="9">
    <citation type="submission" date="2005-07" db="EMBL/GenBank/DDBJ databases">
        <authorList>
            <person name="Mural R.J."/>
            <person name="Istrail S."/>
            <person name="Sutton G.G."/>
            <person name="Florea L."/>
            <person name="Halpern A.L."/>
            <person name="Mobarry C.M."/>
            <person name="Lippert R."/>
            <person name="Walenz B."/>
            <person name="Shatkay H."/>
            <person name="Dew I."/>
            <person name="Miller J.R."/>
            <person name="Flanigan M.J."/>
            <person name="Edwards N.J."/>
            <person name="Bolanos R."/>
            <person name="Fasulo D."/>
            <person name="Halldorsson B.V."/>
            <person name="Hannenhalli S."/>
            <person name="Turner R."/>
            <person name="Yooseph S."/>
            <person name="Lu F."/>
            <person name="Nusskern D.R."/>
            <person name="Shue B.C."/>
            <person name="Zheng X.H."/>
            <person name="Zhong F."/>
            <person name="Delcher A.L."/>
            <person name="Huson D.H."/>
            <person name="Kravitz S.A."/>
            <person name="Mouchard L."/>
            <person name="Reinert K."/>
            <person name="Remington K.A."/>
            <person name="Clark A.G."/>
            <person name="Waterman M.S."/>
            <person name="Eichler E.E."/>
            <person name="Adams M.D."/>
            <person name="Hunkapiller M.W."/>
            <person name="Myers E.W."/>
            <person name="Venter J.C."/>
        </authorList>
    </citation>
    <scope>NUCLEOTIDE SEQUENCE [LARGE SCALE GENOMIC DNA]</scope>
</reference>
<reference key="10">
    <citation type="journal article" date="2004" name="Genome Res.">
        <title>The status, quality, and expansion of the NIH full-length cDNA project: the Mammalian Gene Collection (MGC).</title>
        <authorList>
            <consortium name="The MGC Project Team"/>
        </authorList>
    </citation>
    <scope>NUCLEOTIDE SEQUENCE [LARGE SCALE MRNA]</scope>
    <source>
        <tissue>Skeletal muscle</tissue>
    </source>
</reference>
<reference key="11">
    <citation type="journal article" date="1984" name="J. Biol. Chem.">
        <title>The isolation and characterization of cDNA clones for human apolipoprotein CII.</title>
        <authorList>
            <person name="Myklebost O."/>
            <person name="Williamson B."/>
            <person name="Markham A.F."/>
            <person name="Myklebost S.R."/>
            <person name="Rogers J."/>
            <person name="Woods D.E."/>
            <person name="Humphries S.E."/>
        </authorList>
    </citation>
    <scope>NUCLEOTIDE SEQUENCE [MRNA] OF 6-101</scope>
    <scope>TISSUE SPECIFICITY</scope>
</reference>
<reference key="12">
    <citation type="journal article" date="1986" name="Methods Enzymol.">
        <title>Isolation of cDNA and genomic clones for apolipoprotein C-II.</title>
        <authorList>
            <person name="Jackson C.L."/>
            <person name="Bruns G.A.P."/>
            <person name="Breslow J.L."/>
        </authorList>
    </citation>
    <scope>NUCLEOTIDE SEQUENCE [GENOMIC DNA / MRNA] OF 11-101</scope>
</reference>
<reference key="13">
    <citation type="journal article" date="1984" name="J. Biol. Chem.">
        <title>Amino acid sequence of human plasma apolipoprotein C-II from normal and hyperlipoproteinemic subjects.</title>
        <authorList>
            <person name="Hospattankar A.V."/>
            <person name="Fairwell T."/>
            <person name="Ronan R."/>
            <person name="Brewer H.B. Jr."/>
        </authorList>
    </citation>
    <scope>PROTEIN SEQUENCE OF 23-101</scope>
</reference>
<reference key="14">
    <citation type="journal article" date="1977" name="Proc. Natl. Acad. Sci. U.S.A.">
        <title>Primary structure of very low density apolipoprotein C-II of human plasma.</title>
        <authorList>
            <person name="Jackson R.L."/>
            <person name="Baker H.N."/>
            <person name="Gilliam E.B."/>
            <person name="Gotto A.M. Jr."/>
        </authorList>
    </citation>
    <scope>PROTEIN SEQUENCE OF 23-101</scope>
</reference>
<reference key="15">
    <citation type="journal article" date="1986" name="J. Biol. Chem.">
        <title>Human preproapolipoprotein C-II. Analysis of major plasma isoforms.</title>
        <authorList>
            <person name="Fojo S.S."/>
            <person name="Taam L."/>
            <person name="Fairwell T."/>
            <person name="Ronan R."/>
            <person name="Bishop C."/>
            <person name="Meng M.S."/>
            <person name="Hoeg J.M."/>
            <person name="Sprecher D.L."/>
            <person name="Brewer H.B. Jr."/>
        </authorList>
    </citation>
    <scope>PROTEIN SEQUENCE OF 29-35</scope>
    <scope>PROTEOLYTIC PROCESSING</scope>
    <scope>GLYCOSYLATION</scope>
    <scope>SUBCELLULAR LOCATION</scope>
</reference>
<reference key="16">
    <citation type="journal article" date="2001" name="J. Leukoc. Biol.">
        <title>Expression of the apolipoprotein C-II gene during myelomonocytic differentiation of human leukemic cells.</title>
        <authorList>
            <person name="Chun E.M."/>
            <person name="Park Y.J."/>
            <person name="Kang H.S."/>
            <person name="Cho H.M."/>
            <person name="Jun D.Y."/>
            <person name="Kim Y.H."/>
        </authorList>
    </citation>
    <scope>NUCLEOTIDE SEQUENCE [MRNA] OF 77-101</scope>
</reference>
<reference key="17">
    <citation type="journal article" date="1980" name="Ann. N. Y. Acad. Sci.">
        <title>Phospholipid binding studies with synthetic apolipoprotein fragments.</title>
        <authorList>
            <person name="Sparrow J.T."/>
            <person name="Gotto A.M. Jr."/>
        </authorList>
    </citation>
    <scope>REGION LIPOPROTEIN LIPASE COFACTOR AND REGION LIPID BINDING</scope>
</reference>
<reference key="18">
    <citation type="journal article" date="1990" name="Eur. J. Biochem.">
        <title>Primary structure of the bovine analogues to human apolipoproteins CII and CIII. Studies on isoforms and evidence for proteolytic processing.</title>
        <authorList>
            <person name="Bengtsson-Olivecrona G."/>
            <person name="Sletten K."/>
        </authorList>
    </citation>
    <scope>FUNCTION</scope>
</reference>
<reference key="19">
    <citation type="journal article" date="2012" name="Metabolism">
        <title>A review of the role of apolipoprotein C-II in lipoprotein metabolism and cardiovascular disease.</title>
        <authorList>
            <person name="Kei A.A."/>
            <person name="Filippatos T.D."/>
            <person name="Tsimihodimos V."/>
            <person name="Elisaf M.S."/>
        </authorList>
    </citation>
    <scope>REVIEW</scope>
</reference>
<reference key="20">
    <citation type="journal article" date="2013" name="J. Proteome Res.">
        <title>LC-MS/MS characterization of O-glycosylation sites and glycan structures of human cerebrospinal fluid glycoproteins.</title>
        <authorList>
            <person name="Halim A."/>
            <person name="Ruetschi U."/>
            <person name="Larson G."/>
            <person name="Nilsson J."/>
        </authorList>
    </citation>
    <scope>GLYCOSYLATION</scope>
    <scope>IDENTIFICATION BY MASS SPECTROMETRY</scope>
</reference>
<reference key="21">
    <citation type="journal article" date="2014" name="J. Proteomics">
        <title>An enzyme assisted RP-RPLC approach for in-depth analysis of human liver phosphoproteome.</title>
        <authorList>
            <person name="Bian Y."/>
            <person name="Song C."/>
            <person name="Cheng K."/>
            <person name="Dong M."/>
            <person name="Wang F."/>
            <person name="Huang J."/>
            <person name="Sun D."/>
            <person name="Wang L."/>
            <person name="Ye M."/>
            <person name="Zou H."/>
        </authorList>
    </citation>
    <scope>IDENTIFICATION BY MASS SPECTROMETRY [LARGE SCALE ANALYSIS]</scope>
    <source>
        <tissue>Liver</tissue>
    </source>
</reference>
<reference key="22">
    <citation type="journal article" date="1992" name="Eur. J. Biochem.">
        <title>Sequence specific 1H-NMR assignments and secondary structure of a carboxy-terminal functional fragment of apolipoprotein CII.</title>
        <authorList>
            <person name="Lycksell P.-O."/>
            <person name="Oehman A."/>
            <person name="Bengtsson-Olivecrona G."/>
            <person name="Johansson L.B.-A."/>
            <person name="Wijmenga S.S."/>
            <person name="Wernic D."/>
            <person name="Graeslund A."/>
        </authorList>
    </citation>
    <scope>STRUCTURE BY NMR OF 72-101</scope>
    <scope>REGION LIPOPROTEIN LIPASE COFACTOR</scope>
</reference>
<reference key="23">
    <citation type="journal article" date="1993" name="Eur. Biophys. J.">
        <title>A refined three-dimensional solution structure of a carboxy terminal fragment of apolipoprotein CII.</title>
        <authorList>
            <person name="Oehman A."/>
            <person name="Lycksell P.-O."/>
            <person name="Graeslund A."/>
        </authorList>
    </citation>
    <scope>STRUCTURE BY NMR OF 72-101</scope>
</reference>
<reference key="24">
    <citation type="journal article" date="1986" name="J. Clin. Invest.">
        <title>A variant primary structure of apolipoprotein C-II in individuals of African descent.</title>
        <authorList>
            <person name="Menzel H.-J."/>
            <person name="Kane J.P."/>
            <person name="Malloy M.J."/>
            <person name="Havel R.J."/>
        </authorList>
    </citation>
    <scope>VARIANT AFRICA GLN-77</scope>
</reference>
<reference key="25">
    <citation type="journal article" date="1993" name="Hum. Mol. Genet.">
        <title>Molecular cloning and characteristics of a new apolipoprotein C-II mutant identified in three unrelated individuals with hypercholesterolemia and hypertriglyceridemia.</title>
        <authorList>
            <person name="Pullinger C.R."/>
            <person name="Zysow B.R."/>
            <person name="Hennessy L.K."/>
            <person name="Frost P.H."/>
            <person name="Malloy M.J."/>
            <person name="Kanr J.P."/>
        </authorList>
    </citation>
    <scope>VARIANT SAN FRANCISCO LYS-60</scope>
</reference>
<reference key="26">
    <citation type="journal article" date="1991" name="Dis. Markers">
        <title>An apolipoprotein CII mutation, CII Lys-19--&gt;Thr identified in patients with hyperlipidemia.</title>
        <authorList>
            <person name="Hegele R.A."/>
            <person name="Connelly P.W."/>
            <person name="Maguire G.F."/>
            <person name="Huff M.W."/>
            <person name="Leiter L."/>
            <person name="Wolfe B.M."/>
            <person name="Evans A.J."/>
            <person name="Little J.A."/>
        </authorList>
    </citation>
    <scope>VARIANT THR-41</scope>
</reference>
<reference key="27">
    <citation type="journal article" date="1994" name="Clin. Genet.">
        <title>The apolipoprotein C-II variant apoC-II Lys-19--&gt;Thr is not associated with dyslipidemia in an affected kindred.</title>
        <authorList>
            <person name="Zysow B.R."/>
            <person name="Pullinger C.R."/>
            <person name="Hennessy L.K."/>
            <person name="Farese R.V. Jr."/>
            <person name="Ghassemzadeh M."/>
            <person name="Kane J.P."/>
        </authorList>
    </citation>
    <scope>VARIANT THR-41</scope>
</reference>
<reference key="28">
    <citation type="journal article" date="1993" name="Biochem. Biophys. Res. Commun.">
        <title>A missense mutation (Trp 26--&gt;Arg) in exon 3 of the apolipoprotein CII gene in a patient with apolipoprotein CII deficiency (apo CII-Wakayama).</title>
        <authorList>
            <person name="Inadera H."/>
            <person name="Hibino A."/>
            <person name="Kobayashi J."/>
            <person name="Kanzaki T."/>
            <person name="Shirai K."/>
            <person name="Yukawa S."/>
            <person name="Saito Y."/>
            <person name="Yoshida S."/>
        </authorList>
    </citation>
    <scope>VARIANT HLPP1B WAKAYAMA ARG-48</scope>
</reference>
<reference key="29">
    <citation type="journal article" date="1999" name="Nat. Genet.">
        <title>Patterns of single-nucleotide polymorphisms in candidate genes for blood-pressure homeostasis.</title>
        <authorList>
            <person name="Halushka M.K."/>
            <person name="Fan J.-B."/>
            <person name="Bentley K."/>
            <person name="Hsie L."/>
            <person name="Shen N."/>
            <person name="Weder A."/>
            <person name="Cooper R."/>
            <person name="Lipshutz R."/>
            <person name="Chakravarti A."/>
        </authorList>
    </citation>
    <scope>VARIANT GLN-77</scope>
</reference>
<protein>
    <recommendedName>
        <fullName>Apolipoprotein C-II</fullName>
        <shortName>Apo-CII</shortName>
        <shortName>ApoC-II</shortName>
    </recommendedName>
    <alternativeName>
        <fullName>Apolipoprotein C2</fullName>
    </alternativeName>
    <component>
        <recommendedName>
            <fullName>Proapolipoprotein C-II</fullName>
            <shortName>ProapoC-II</shortName>
        </recommendedName>
    </component>
</protein>
<accession>P02655</accession>
<accession>C0JYY4</accession>
<accession>Q9BS39</accession>
<accession>Q9UDE3</accession>
<accession>Q9UNK3</accession>